<comment type="function">
    <text evidence="2">Catalyzes the conversion of (8S)-3',8-cyclo-7,8-dihydroguanosine 5'-triphosphate to cyclic pyranopterin monophosphate (cPMP).</text>
</comment>
<comment type="catalytic activity">
    <reaction evidence="2">
        <text>(8S)-3',8-cyclo-7,8-dihydroguanosine 5'-triphosphate = cyclic pyranopterin phosphate + diphosphate</text>
        <dbReference type="Rhea" id="RHEA:49580"/>
        <dbReference type="ChEBI" id="CHEBI:33019"/>
        <dbReference type="ChEBI" id="CHEBI:59648"/>
        <dbReference type="ChEBI" id="CHEBI:131766"/>
        <dbReference type="EC" id="4.6.1.17"/>
    </reaction>
</comment>
<comment type="pathway">
    <text evidence="2">Cofactor biosynthesis; molybdopterin biosynthesis.</text>
</comment>
<comment type="subunit">
    <text evidence="2">Homohexamer; trimer of dimers.</text>
</comment>
<comment type="similarity">
    <text evidence="2">Belongs to the MoaC family.</text>
</comment>
<organism>
    <name type="scientific">Salmonella typhimurium (strain LT2 / SGSC1412 / ATCC 700720)</name>
    <dbReference type="NCBI Taxonomy" id="99287"/>
    <lineage>
        <taxon>Bacteria</taxon>
        <taxon>Pseudomonadati</taxon>
        <taxon>Pseudomonadota</taxon>
        <taxon>Gammaproteobacteria</taxon>
        <taxon>Enterobacterales</taxon>
        <taxon>Enterobacteriaceae</taxon>
        <taxon>Salmonella</taxon>
    </lineage>
</organism>
<gene>
    <name evidence="2" type="primary">moaC</name>
    <name type="ordered locus">STM0804</name>
</gene>
<proteinExistence type="inferred from homology"/>
<reference key="1">
    <citation type="journal article" date="2001" name="Nature">
        <title>Complete genome sequence of Salmonella enterica serovar Typhimurium LT2.</title>
        <authorList>
            <person name="McClelland M."/>
            <person name="Sanderson K.E."/>
            <person name="Spieth J."/>
            <person name="Clifton S.W."/>
            <person name="Latreille P."/>
            <person name="Courtney L."/>
            <person name="Porwollik S."/>
            <person name="Ali J."/>
            <person name="Dante M."/>
            <person name="Du F."/>
            <person name="Hou S."/>
            <person name="Layman D."/>
            <person name="Leonard S."/>
            <person name="Nguyen C."/>
            <person name="Scott K."/>
            <person name="Holmes A."/>
            <person name="Grewal N."/>
            <person name="Mulvaney E."/>
            <person name="Ryan E."/>
            <person name="Sun H."/>
            <person name="Florea L."/>
            <person name="Miller W."/>
            <person name="Stoneking T."/>
            <person name="Nhan M."/>
            <person name="Waterston R."/>
            <person name="Wilson R.K."/>
        </authorList>
    </citation>
    <scope>NUCLEOTIDE SEQUENCE [LARGE SCALE GENOMIC DNA]</scope>
    <source>
        <strain>LT2 / SGSC1412 / ATCC 700720</strain>
    </source>
</reference>
<keyword id="KW-0456">Lyase</keyword>
<keyword id="KW-0501">Molybdenum cofactor biosynthesis</keyword>
<keyword id="KW-1185">Reference proteome</keyword>
<evidence type="ECO:0000250" key="1"/>
<evidence type="ECO:0000255" key="2">
    <source>
        <dbReference type="HAMAP-Rule" id="MF_01224"/>
    </source>
</evidence>
<feature type="initiator methionine" description="Removed" evidence="1">
    <location>
        <position position="1"/>
    </location>
</feature>
<feature type="chain" id="PRO_0000097826" description="Cyclic pyranopterin monophosphate synthase">
    <location>
        <begin position="2"/>
        <end position="161"/>
    </location>
</feature>
<feature type="active site" evidence="2">
    <location>
        <position position="128"/>
    </location>
</feature>
<feature type="binding site" evidence="2">
    <location>
        <begin position="75"/>
        <end position="77"/>
    </location>
    <ligand>
        <name>substrate</name>
    </ligand>
</feature>
<feature type="binding site" evidence="2">
    <location>
        <begin position="113"/>
        <end position="114"/>
    </location>
    <ligand>
        <name>substrate</name>
    </ligand>
</feature>
<dbReference type="EC" id="4.6.1.17" evidence="2"/>
<dbReference type="EMBL" id="AE006468">
    <property type="protein sequence ID" value="AAL19741.1"/>
    <property type="molecule type" value="Genomic_DNA"/>
</dbReference>
<dbReference type="RefSeq" id="NP_459782.1">
    <property type="nucleotide sequence ID" value="NC_003197.2"/>
</dbReference>
<dbReference type="RefSeq" id="WP_000080894.1">
    <property type="nucleotide sequence ID" value="NC_003197.2"/>
</dbReference>
<dbReference type="SMR" id="Q8ZQQ1"/>
<dbReference type="STRING" id="99287.STM0804"/>
<dbReference type="PaxDb" id="99287-STM0804"/>
<dbReference type="GeneID" id="1252324"/>
<dbReference type="KEGG" id="stm:STM0804"/>
<dbReference type="PATRIC" id="fig|99287.12.peg.838"/>
<dbReference type="HOGENOM" id="CLU_074693_1_1_6"/>
<dbReference type="OMA" id="IWDMVKS"/>
<dbReference type="PhylomeDB" id="Q8ZQQ1"/>
<dbReference type="BioCyc" id="SENT99287:STM0804-MONOMER"/>
<dbReference type="UniPathway" id="UPA00344"/>
<dbReference type="Proteomes" id="UP000001014">
    <property type="component" value="Chromosome"/>
</dbReference>
<dbReference type="GO" id="GO:0061799">
    <property type="term" value="F:cyclic pyranopterin monophosphate synthase activity"/>
    <property type="evidence" value="ECO:0007669"/>
    <property type="project" value="UniProtKB-UniRule"/>
</dbReference>
<dbReference type="GO" id="GO:0006777">
    <property type="term" value="P:Mo-molybdopterin cofactor biosynthetic process"/>
    <property type="evidence" value="ECO:0007669"/>
    <property type="project" value="UniProtKB-UniRule"/>
</dbReference>
<dbReference type="CDD" id="cd01420">
    <property type="entry name" value="MoaC_PE"/>
    <property type="match status" value="1"/>
</dbReference>
<dbReference type="FunFam" id="3.30.70.640:FF:000001">
    <property type="entry name" value="Cyclic pyranopterin monophosphate synthase"/>
    <property type="match status" value="1"/>
</dbReference>
<dbReference type="Gene3D" id="3.30.70.640">
    <property type="entry name" value="Molybdopterin cofactor biosynthesis C (MoaC) domain"/>
    <property type="match status" value="1"/>
</dbReference>
<dbReference type="HAMAP" id="MF_01224_B">
    <property type="entry name" value="MoaC_B"/>
    <property type="match status" value="1"/>
</dbReference>
<dbReference type="InterPro" id="IPR023045">
    <property type="entry name" value="MoaC"/>
</dbReference>
<dbReference type="InterPro" id="IPR047594">
    <property type="entry name" value="MoaC_bact/euk"/>
</dbReference>
<dbReference type="InterPro" id="IPR036522">
    <property type="entry name" value="MoaC_sf"/>
</dbReference>
<dbReference type="InterPro" id="IPR050105">
    <property type="entry name" value="MoCo_biosynth_MoaA/MoaC"/>
</dbReference>
<dbReference type="InterPro" id="IPR002820">
    <property type="entry name" value="Mopterin_CF_biosynth-C_dom"/>
</dbReference>
<dbReference type="NCBIfam" id="TIGR00581">
    <property type="entry name" value="moaC"/>
    <property type="match status" value="1"/>
</dbReference>
<dbReference type="NCBIfam" id="NF006870">
    <property type="entry name" value="PRK09364.1"/>
    <property type="match status" value="1"/>
</dbReference>
<dbReference type="PANTHER" id="PTHR22960">
    <property type="entry name" value="MOLYBDOPTERIN COFACTOR SYNTHESIS PROTEIN A"/>
    <property type="match status" value="1"/>
</dbReference>
<dbReference type="Pfam" id="PF01967">
    <property type="entry name" value="MoaC"/>
    <property type="match status" value="1"/>
</dbReference>
<dbReference type="SUPFAM" id="SSF55040">
    <property type="entry name" value="Molybdenum cofactor biosynthesis protein C, MoaC"/>
    <property type="match status" value="1"/>
</dbReference>
<accession>Q8ZQQ1</accession>
<name>MOAC_SALTY</name>
<protein>
    <recommendedName>
        <fullName evidence="2">Cyclic pyranopterin monophosphate synthase</fullName>
        <ecNumber evidence="2">4.6.1.17</ecNumber>
    </recommendedName>
    <alternativeName>
        <fullName evidence="2">Molybdenum cofactor biosynthesis protein C</fullName>
    </alternativeName>
</protein>
<sequence length="161" mass="17443">MSQLTHINAAGEAHMVDVSAKAETVREARAEAFVTMRSETLAMIVDGKHHKGDVFATARIAGIQAAKRTWELIPLCHPLLLSKVEIQLQAEPEHNRVRIESLCRLTGKTGVEMEALTAASVAALTIYDMCKAVQKDMVIGPVRLLAKSGGKSGDFKVDAHD</sequence>